<reference key="1">
    <citation type="journal article" date="2005" name="Arch. Microbiol.">
        <title>The genome sequence of an anaerobic aromatic-degrading denitrifying bacterium, strain EbN1.</title>
        <authorList>
            <person name="Rabus R."/>
            <person name="Kube M."/>
            <person name="Heider J."/>
            <person name="Beck A."/>
            <person name="Heitmann K."/>
            <person name="Widdel F."/>
            <person name="Reinhardt R."/>
        </authorList>
    </citation>
    <scope>NUCLEOTIDE SEQUENCE [LARGE SCALE GENOMIC DNA]</scope>
    <source>
        <strain>DSM 19018 / LMG 30748 / EbN1</strain>
    </source>
</reference>
<comment type="function">
    <text evidence="1">May play a key role in the regulation of the intracellular concentration of adenosylhomocysteine.</text>
</comment>
<comment type="catalytic activity">
    <reaction evidence="1">
        <text>S-adenosyl-L-homocysteine + H2O = L-homocysteine + adenosine</text>
        <dbReference type="Rhea" id="RHEA:21708"/>
        <dbReference type="ChEBI" id="CHEBI:15377"/>
        <dbReference type="ChEBI" id="CHEBI:16335"/>
        <dbReference type="ChEBI" id="CHEBI:57856"/>
        <dbReference type="ChEBI" id="CHEBI:58199"/>
        <dbReference type="EC" id="3.13.2.1"/>
    </reaction>
</comment>
<comment type="cofactor">
    <cofactor evidence="1">
        <name>NAD(+)</name>
        <dbReference type="ChEBI" id="CHEBI:57540"/>
    </cofactor>
    <text evidence="1">Binds 1 NAD(+) per subunit.</text>
</comment>
<comment type="pathway">
    <text evidence="1">Amino-acid biosynthesis; L-homocysteine biosynthesis; L-homocysteine from S-adenosyl-L-homocysteine: step 1/1.</text>
</comment>
<comment type="subcellular location">
    <subcellularLocation>
        <location evidence="1">Cytoplasm</location>
    </subcellularLocation>
</comment>
<comment type="similarity">
    <text evidence="1">Belongs to the adenosylhomocysteinase family.</text>
</comment>
<protein>
    <recommendedName>
        <fullName evidence="1">Adenosylhomocysteinase</fullName>
        <ecNumber evidence="1">3.13.2.1</ecNumber>
    </recommendedName>
    <alternativeName>
        <fullName evidence="1">S-adenosyl-L-homocysteine hydrolase</fullName>
        <shortName evidence="1">AdoHcyase</shortName>
    </alternativeName>
</protein>
<name>SAHH_AROAE</name>
<gene>
    <name evidence="1" type="primary">ahcY</name>
    <name type="ordered locus">AZOSEA10190</name>
    <name type="ORF">ebA1874</name>
</gene>
<sequence>MNSVAENFTDYVVADLALAGWGRKEIRIAETEMPGLMAIREEFAVVQPLKGARITGSLHMTIQTAVLIETLTALGAEVRWASCNIFSTQDHAAAAIAASGVPVFAVKGESLADYWDYTHRIFEWRDGGYSNMILDDGGDATLLLHLGARAEKDVSVLAKPGSEEERVLFAAIRAKLASDPTWYSVRLAAIRGVTEETTTGVHRLYQMFERGELKFPAINVNDSVTKSKFDNLYGCRESLVDGIKRATDVMVAGKVAVVCGYGDVGKGSAQALRALSAQVWVTEIDPICALQAAMEGYRVVTMDYAAEHADIFVTCTGNYHVIRHDHMARMKDQAIVCNIGHFDNEIDVASIEGYEWEEIKPQVDHVIFPDGKRIILLAKGRLVNLGCATGHPSYVMSSSFANQTIAQIELFTRTADYPVGVYTLPKHLDEKVARLQLKKLNAQLTELRPDQAAYIGVPVEGPYKSAHYRY</sequence>
<feature type="chain" id="PRO_1000196668" description="Adenosylhomocysteinase">
    <location>
        <begin position="1"/>
        <end position="470"/>
    </location>
</feature>
<feature type="binding site" evidence="1">
    <location>
        <position position="61"/>
    </location>
    <ligand>
        <name>substrate</name>
    </ligand>
</feature>
<feature type="binding site" evidence="1">
    <location>
        <position position="136"/>
    </location>
    <ligand>
        <name>substrate</name>
    </ligand>
</feature>
<feature type="binding site" evidence="1">
    <location>
        <position position="196"/>
    </location>
    <ligand>
        <name>substrate</name>
    </ligand>
</feature>
<feature type="binding site" evidence="1">
    <location>
        <begin position="197"/>
        <end position="199"/>
    </location>
    <ligand>
        <name>NAD(+)</name>
        <dbReference type="ChEBI" id="CHEBI:57540"/>
    </ligand>
</feature>
<feature type="binding site" evidence="1">
    <location>
        <position position="226"/>
    </location>
    <ligand>
        <name>substrate</name>
    </ligand>
</feature>
<feature type="binding site" evidence="1">
    <location>
        <position position="230"/>
    </location>
    <ligand>
        <name>substrate</name>
    </ligand>
</feature>
<feature type="binding site" evidence="1">
    <location>
        <position position="231"/>
    </location>
    <ligand>
        <name>NAD(+)</name>
        <dbReference type="ChEBI" id="CHEBI:57540"/>
    </ligand>
</feature>
<feature type="binding site" evidence="1">
    <location>
        <begin position="260"/>
        <end position="265"/>
    </location>
    <ligand>
        <name>NAD(+)</name>
        <dbReference type="ChEBI" id="CHEBI:57540"/>
    </ligand>
</feature>
<feature type="binding site" evidence="1">
    <location>
        <position position="283"/>
    </location>
    <ligand>
        <name>NAD(+)</name>
        <dbReference type="ChEBI" id="CHEBI:57540"/>
    </ligand>
</feature>
<feature type="binding site" evidence="1">
    <location>
        <position position="318"/>
    </location>
    <ligand>
        <name>NAD(+)</name>
        <dbReference type="ChEBI" id="CHEBI:57540"/>
    </ligand>
</feature>
<feature type="binding site" evidence="1">
    <location>
        <begin position="339"/>
        <end position="341"/>
    </location>
    <ligand>
        <name>NAD(+)</name>
        <dbReference type="ChEBI" id="CHEBI:57540"/>
    </ligand>
</feature>
<feature type="binding site" evidence="1">
    <location>
        <position position="384"/>
    </location>
    <ligand>
        <name>NAD(+)</name>
        <dbReference type="ChEBI" id="CHEBI:57540"/>
    </ligand>
</feature>
<proteinExistence type="inferred from homology"/>
<dbReference type="EC" id="3.13.2.1" evidence="1"/>
<dbReference type="EMBL" id="CR555306">
    <property type="protein sequence ID" value="CAI07144.1"/>
    <property type="molecule type" value="Genomic_DNA"/>
</dbReference>
<dbReference type="RefSeq" id="WP_011236869.1">
    <property type="nucleotide sequence ID" value="NC_006513.1"/>
</dbReference>
<dbReference type="SMR" id="Q5P6B7"/>
<dbReference type="STRING" id="76114.ebA1874"/>
<dbReference type="KEGG" id="eba:ebA1874"/>
<dbReference type="eggNOG" id="COG0499">
    <property type="taxonomic scope" value="Bacteria"/>
</dbReference>
<dbReference type="HOGENOM" id="CLU_025194_2_1_4"/>
<dbReference type="OrthoDB" id="9802717at2"/>
<dbReference type="UniPathway" id="UPA00314">
    <property type="reaction ID" value="UER00076"/>
</dbReference>
<dbReference type="Proteomes" id="UP000006552">
    <property type="component" value="Chromosome"/>
</dbReference>
<dbReference type="GO" id="GO:0005829">
    <property type="term" value="C:cytosol"/>
    <property type="evidence" value="ECO:0007669"/>
    <property type="project" value="TreeGrafter"/>
</dbReference>
<dbReference type="GO" id="GO:0004013">
    <property type="term" value="F:adenosylhomocysteinase activity"/>
    <property type="evidence" value="ECO:0007669"/>
    <property type="project" value="UniProtKB-UniRule"/>
</dbReference>
<dbReference type="GO" id="GO:0071269">
    <property type="term" value="P:L-homocysteine biosynthetic process"/>
    <property type="evidence" value="ECO:0007669"/>
    <property type="project" value="UniProtKB-UniRule"/>
</dbReference>
<dbReference type="GO" id="GO:0006730">
    <property type="term" value="P:one-carbon metabolic process"/>
    <property type="evidence" value="ECO:0007669"/>
    <property type="project" value="UniProtKB-KW"/>
</dbReference>
<dbReference type="GO" id="GO:0033353">
    <property type="term" value="P:S-adenosylmethionine cycle"/>
    <property type="evidence" value="ECO:0007669"/>
    <property type="project" value="TreeGrafter"/>
</dbReference>
<dbReference type="CDD" id="cd00401">
    <property type="entry name" value="SAHH"/>
    <property type="match status" value="1"/>
</dbReference>
<dbReference type="FunFam" id="3.40.50.720:FF:000004">
    <property type="entry name" value="Adenosylhomocysteinase"/>
    <property type="match status" value="1"/>
</dbReference>
<dbReference type="Gene3D" id="3.40.50.1480">
    <property type="entry name" value="Adenosylhomocysteinase-like"/>
    <property type="match status" value="1"/>
</dbReference>
<dbReference type="Gene3D" id="3.40.50.720">
    <property type="entry name" value="NAD(P)-binding Rossmann-like Domain"/>
    <property type="match status" value="1"/>
</dbReference>
<dbReference type="HAMAP" id="MF_00563">
    <property type="entry name" value="AdoHcyase"/>
    <property type="match status" value="1"/>
</dbReference>
<dbReference type="InterPro" id="IPR042172">
    <property type="entry name" value="Adenosylhomocyst_ase-like_sf"/>
</dbReference>
<dbReference type="InterPro" id="IPR000043">
    <property type="entry name" value="Adenosylhomocysteinase-like"/>
</dbReference>
<dbReference type="InterPro" id="IPR015878">
    <property type="entry name" value="Ado_hCys_hydrolase_NAD-bd"/>
</dbReference>
<dbReference type="InterPro" id="IPR036291">
    <property type="entry name" value="NAD(P)-bd_dom_sf"/>
</dbReference>
<dbReference type="InterPro" id="IPR020082">
    <property type="entry name" value="S-Ado-L-homoCys_hydrolase_CS"/>
</dbReference>
<dbReference type="NCBIfam" id="TIGR00936">
    <property type="entry name" value="ahcY"/>
    <property type="match status" value="1"/>
</dbReference>
<dbReference type="NCBIfam" id="NF004005">
    <property type="entry name" value="PRK05476.2-3"/>
    <property type="match status" value="1"/>
</dbReference>
<dbReference type="PANTHER" id="PTHR23420">
    <property type="entry name" value="ADENOSYLHOMOCYSTEINASE"/>
    <property type="match status" value="1"/>
</dbReference>
<dbReference type="PANTHER" id="PTHR23420:SF0">
    <property type="entry name" value="ADENOSYLHOMOCYSTEINASE"/>
    <property type="match status" value="1"/>
</dbReference>
<dbReference type="Pfam" id="PF05221">
    <property type="entry name" value="AdoHcyase"/>
    <property type="match status" value="1"/>
</dbReference>
<dbReference type="Pfam" id="PF00670">
    <property type="entry name" value="AdoHcyase_NAD"/>
    <property type="match status" value="1"/>
</dbReference>
<dbReference type="PIRSF" id="PIRSF001109">
    <property type="entry name" value="Ad_hcy_hydrolase"/>
    <property type="match status" value="1"/>
</dbReference>
<dbReference type="SMART" id="SM00996">
    <property type="entry name" value="AdoHcyase"/>
    <property type="match status" value="1"/>
</dbReference>
<dbReference type="SMART" id="SM00997">
    <property type="entry name" value="AdoHcyase_NAD"/>
    <property type="match status" value="1"/>
</dbReference>
<dbReference type="SUPFAM" id="SSF52283">
    <property type="entry name" value="Formate/glycerate dehydrogenase catalytic domain-like"/>
    <property type="match status" value="1"/>
</dbReference>
<dbReference type="SUPFAM" id="SSF51735">
    <property type="entry name" value="NAD(P)-binding Rossmann-fold domains"/>
    <property type="match status" value="1"/>
</dbReference>
<dbReference type="PROSITE" id="PS00738">
    <property type="entry name" value="ADOHCYASE_1"/>
    <property type="match status" value="1"/>
</dbReference>
<dbReference type="PROSITE" id="PS00739">
    <property type="entry name" value="ADOHCYASE_2"/>
    <property type="match status" value="1"/>
</dbReference>
<accession>Q5P6B7</accession>
<keyword id="KW-0963">Cytoplasm</keyword>
<keyword id="KW-0378">Hydrolase</keyword>
<keyword id="KW-0520">NAD</keyword>
<keyword id="KW-0554">One-carbon metabolism</keyword>
<keyword id="KW-1185">Reference proteome</keyword>
<evidence type="ECO:0000255" key="1">
    <source>
        <dbReference type="HAMAP-Rule" id="MF_00563"/>
    </source>
</evidence>
<organism>
    <name type="scientific">Aromatoleum aromaticum (strain DSM 19018 / LMG 30748 / EbN1)</name>
    <name type="common">Azoarcus sp. (strain EbN1)</name>
    <dbReference type="NCBI Taxonomy" id="76114"/>
    <lineage>
        <taxon>Bacteria</taxon>
        <taxon>Pseudomonadati</taxon>
        <taxon>Pseudomonadota</taxon>
        <taxon>Betaproteobacteria</taxon>
        <taxon>Rhodocyclales</taxon>
        <taxon>Rhodocyclaceae</taxon>
        <taxon>Aromatoleum</taxon>
    </lineage>
</organism>